<comment type="similarity">
    <text evidence="2">Belongs to the OCC1 family.</text>
</comment>
<sequence>MGCGNSTAGGAGGRGATGTTKDAAEESVSDDDKRRNYGGVYVGLPSDAAAMVSGQTKAAPKD</sequence>
<evidence type="ECO:0000256" key="1">
    <source>
        <dbReference type="SAM" id="MobiDB-lite"/>
    </source>
</evidence>
<evidence type="ECO:0000305" key="2"/>
<proteinExistence type="inferred from homology"/>
<keyword id="KW-1185">Reference proteome</keyword>
<name>OCC1_CHICK</name>
<accession>P0C915</accession>
<reference key="1">
    <citation type="submission" date="2005-12" db="EMBL/GenBank/DDBJ databases">
        <title>Embryonic gonad cDNA library.</title>
        <authorList>
            <person name="Han J.Y."/>
        </authorList>
    </citation>
    <scope>NUCLEOTIDE SEQUENCE [LARGE SCALE MRNA] OF 16-62</scope>
    <source>
        <tissue>Embryonic gonad</tissue>
    </source>
</reference>
<feature type="chain" id="PRO_0000368224" description="Overexpressed in colon carcinoma 1 protein homolog">
    <location>
        <begin position="1"/>
        <end position="62"/>
    </location>
</feature>
<feature type="region of interest" description="Disordered" evidence="1">
    <location>
        <begin position="1"/>
        <end position="62"/>
    </location>
</feature>
<feature type="compositionally biased region" description="Gly residues" evidence="1">
    <location>
        <begin position="1"/>
        <end position="16"/>
    </location>
</feature>
<protein>
    <recommendedName>
        <fullName>Overexpressed in colon carcinoma 1 protein homolog</fullName>
        <shortName>OCC-1</shortName>
    </recommendedName>
</protein>
<dbReference type="EMBL" id="BU139287">
    <property type="status" value="NOT_ANNOTATED_CDS"/>
    <property type="molecule type" value="mRNA"/>
</dbReference>
<dbReference type="RefSeq" id="NP_001138672.1">
    <property type="nucleotide sequence ID" value="NM_001145200.2"/>
</dbReference>
<dbReference type="RefSeq" id="XP_025007489.1">
    <property type="nucleotide sequence ID" value="XM_025151721.3"/>
</dbReference>
<dbReference type="RefSeq" id="XP_046764611.1">
    <property type="nucleotide sequence ID" value="XM_046908655.1"/>
</dbReference>
<dbReference type="FunCoup" id="P0C915">
    <property type="interactions" value="147"/>
</dbReference>
<dbReference type="STRING" id="9031.ENSGALP00000040824"/>
<dbReference type="PaxDb" id="9031-ENSGALP00000040824"/>
<dbReference type="GeneID" id="771624"/>
<dbReference type="KEGG" id="gga:771624"/>
<dbReference type="CTD" id="387882"/>
<dbReference type="VEuPathDB" id="HostDB:geneid_771624"/>
<dbReference type="eggNOG" id="ENOG502SSZ4">
    <property type="taxonomic scope" value="Eukaryota"/>
</dbReference>
<dbReference type="HOGENOM" id="CLU_189545_0_0_1"/>
<dbReference type="InParanoid" id="P0C915"/>
<dbReference type="OrthoDB" id="10370460at2759"/>
<dbReference type="PhylomeDB" id="P0C915"/>
<dbReference type="PRO" id="PR:P0C915"/>
<dbReference type="Proteomes" id="UP000000539">
    <property type="component" value="Unassembled WGS sequence"/>
</dbReference>
<dbReference type="InterPro" id="IPR029133">
    <property type="entry name" value="OCC1"/>
</dbReference>
<dbReference type="PANTHER" id="PTHR38502">
    <property type="entry name" value="OVEREXPRESSED IN COLON CARCINOMA 1 PROTEIN"/>
    <property type="match status" value="1"/>
</dbReference>
<dbReference type="PANTHER" id="PTHR38502:SF1">
    <property type="entry name" value="OVEREXPRESSED IN COLON CARCINOMA 1 PROTEIN"/>
    <property type="match status" value="1"/>
</dbReference>
<dbReference type="Pfam" id="PF15506">
    <property type="entry name" value="OCC1"/>
    <property type="match status" value="1"/>
</dbReference>
<organism>
    <name type="scientific">Gallus gallus</name>
    <name type="common">Chicken</name>
    <dbReference type="NCBI Taxonomy" id="9031"/>
    <lineage>
        <taxon>Eukaryota</taxon>
        <taxon>Metazoa</taxon>
        <taxon>Chordata</taxon>
        <taxon>Craniata</taxon>
        <taxon>Vertebrata</taxon>
        <taxon>Euteleostomi</taxon>
        <taxon>Archelosauria</taxon>
        <taxon>Archosauria</taxon>
        <taxon>Dinosauria</taxon>
        <taxon>Saurischia</taxon>
        <taxon>Theropoda</taxon>
        <taxon>Coelurosauria</taxon>
        <taxon>Aves</taxon>
        <taxon>Neognathae</taxon>
        <taxon>Galloanserae</taxon>
        <taxon>Galliformes</taxon>
        <taxon>Phasianidae</taxon>
        <taxon>Phasianinae</taxon>
        <taxon>Gallus</taxon>
    </lineage>
</organism>